<name>FLOA_DESAH</name>
<dbReference type="EMBL" id="CP001087">
    <property type="protein sequence ID" value="ACN14880.1"/>
    <property type="molecule type" value="Genomic_DNA"/>
</dbReference>
<dbReference type="RefSeq" id="WP_015903666.1">
    <property type="nucleotide sequence ID" value="NC_012108.1"/>
</dbReference>
<dbReference type="SMR" id="C0QB81"/>
<dbReference type="STRING" id="177437.HRM2_17760"/>
<dbReference type="KEGG" id="dat:HRM2_17760"/>
<dbReference type="eggNOG" id="COG4864">
    <property type="taxonomic scope" value="Bacteria"/>
</dbReference>
<dbReference type="HOGENOM" id="CLU_836378_0_0_7"/>
<dbReference type="OrthoDB" id="9808365at2"/>
<dbReference type="Proteomes" id="UP000000442">
    <property type="component" value="Chromosome"/>
</dbReference>
<dbReference type="GO" id="GO:0045121">
    <property type="term" value="C:membrane raft"/>
    <property type="evidence" value="ECO:0007669"/>
    <property type="project" value="UniProtKB-SubCell"/>
</dbReference>
<dbReference type="GO" id="GO:0005886">
    <property type="term" value="C:plasma membrane"/>
    <property type="evidence" value="ECO:0007669"/>
    <property type="project" value="UniProtKB-SubCell"/>
</dbReference>
<dbReference type="HAMAP" id="MF_01562">
    <property type="entry name" value="FloA"/>
    <property type="match status" value="1"/>
</dbReference>
<dbReference type="InterPro" id="IPR022853">
    <property type="entry name" value="FloA"/>
</dbReference>
<dbReference type="NCBIfam" id="NF010186">
    <property type="entry name" value="PRK13665.1"/>
    <property type="match status" value="1"/>
</dbReference>
<dbReference type="Pfam" id="PF12127">
    <property type="entry name" value="FloA"/>
    <property type="match status" value="1"/>
</dbReference>
<accession>C0QB81</accession>
<evidence type="ECO:0000255" key="1">
    <source>
        <dbReference type="HAMAP-Rule" id="MF_01562"/>
    </source>
</evidence>
<protein>
    <recommendedName>
        <fullName evidence="1">Flotillin-like protein FloA</fullName>
    </recommendedName>
</protein>
<gene>
    <name evidence="1" type="primary">floA</name>
    <name type="ordered locus">HRM2_17760</name>
</gene>
<comment type="function">
    <text evidence="1">Found in functional membrane microdomains (FMM) that may be equivalent to eukaryotic membrane rafts. FMMs are highly dynamic and increase in number as cells age. Flotillins are thought to be important factors in membrane fluidity.</text>
</comment>
<comment type="subunit">
    <text evidence="1">Homooligomerizes.</text>
</comment>
<comment type="subcellular location">
    <subcellularLocation>
        <location evidence="1">Cell membrane</location>
        <topology evidence="1">Single-pass membrane protein</topology>
    </subcellularLocation>
    <subcellularLocation>
        <location evidence="1">Membrane raft</location>
        <topology evidence="1">Single-pass membrane protein</topology>
    </subcellularLocation>
</comment>
<comment type="similarity">
    <text evidence="1">Belongs to the flotillin-like FloA family.</text>
</comment>
<feature type="chain" id="PRO_1000215510" description="Flotillin-like protein FloA">
    <location>
        <begin position="1"/>
        <end position="326"/>
    </location>
</feature>
<feature type="transmembrane region" description="Helical" evidence="1">
    <location>
        <begin position="3"/>
        <end position="23"/>
    </location>
</feature>
<keyword id="KW-1003">Cell membrane</keyword>
<keyword id="KW-0472">Membrane</keyword>
<keyword id="KW-1185">Reference proteome</keyword>
<keyword id="KW-0812">Transmembrane</keyword>
<keyword id="KW-1133">Transmembrane helix</keyword>
<organism>
    <name type="scientific">Desulforapulum autotrophicum (strain ATCC 43914 / DSM 3382 / VKM B-1955 / HRM2)</name>
    <name type="common">Desulfobacterium autotrophicum</name>
    <dbReference type="NCBI Taxonomy" id="177437"/>
    <lineage>
        <taxon>Bacteria</taxon>
        <taxon>Pseudomonadati</taxon>
        <taxon>Thermodesulfobacteriota</taxon>
        <taxon>Desulfobacteria</taxon>
        <taxon>Desulfobacterales</taxon>
        <taxon>Desulfobacteraceae</taxon>
        <taxon>Desulforapulum</taxon>
    </lineage>
</organism>
<sequence>MEFTTIVVILLVIACIVVLFFIGSSISLWVQSLVSGARVGLLNIVFMRFRKVPPKLIVTSKIMAVKSGLEISTDDFESHYLAGGDVSRVVKALIAADKANIDLPFNRAAAIDLAGRNVLEAVQMSVNPKVIETPLIAAMAKDGIQLKAISRVTVRANIDRLVGGAGEETILARVGEGIVTTIGSANSHKMVLENPDLISKTVLSKGLDSGTAYEILSIDIADVDVGKNIGAELETDRAEADKKIAQAKAEERRAMAYAMEQEMKARVQEMRAKVVEAEAQVPLAMAEAFRQGNLGIMDYYRMKNIVSDTDMRQSIATPEKDDPDQP</sequence>
<reference key="1">
    <citation type="journal article" date="2009" name="Environ. Microbiol.">
        <title>Genome sequence of Desulfobacterium autotrophicum HRM2, a marine sulfate reducer oxidizing organic carbon completely to carbon dioxide.</title>
        <authorList>
            <person name="Strittmatter A.W."/>
            <person name="Liesegang H."/>
            <person name="Rabus R."/>
            <person name="Decker I."/>
            <person name="Amann J."/>
            <person name="Andres S."/>
            <person name="Henne A."/>
            <person name="Fricke W.F."/>
            <person name="Martinez-Arias R."/>
            <person name="Bartels D."/>
            <person name="Goesmann A."/>
            <person name="Krause L."/>
            <person name="Puehler A."/>
            <person name="Klenk H.P."/>
            <person name="Richter M."/>
            <person name="Schuler M."/>
            <person name="Gloeckner F.O."/>
            <person name="Meyerdierks A."/>
            <person name="Gottschalk G."/>
            <person name="Amann R."/>
        </authorList>
    </citation>
    <scope>NUCLEOTIDE SEQUENCE [LARGE SCALE GENOMIC DNA]</scope>
    <source>
        <strain>ATCC 43914 / DSM 3382 / VKM B-1955 / HRM2</strain>
    </source>
</reference>
<proteinExistence type="inferred from homology"/>